<evidence type="ECO:0000255" key="1">
    <source>
        <dbReference type="HAMAP-Rule" id="MF_00632"/>
    </source>
</evidence>
<keyword id="KW-0547">Nucleotide-binding</keyword>
<keyword id="KW-1185">Reference proteome</keyword>
<dbReference type="EMBL" id="AL954747">
    <property type="protein sequence ID" value="CAD86160.1"/>
    <property type="molecule type" value="Genomic_DNA"/>
</dbReference>
<dbReference type="RefSeq" id="WP_011112739.1">
    <property type="nucleotide sequence ID" value="NC_004757.1"/>
</dbReference>
<dbReference type="SMR" id="Q82SQ9"/>
<dbReference type="STRING" id="228410.NE2248"/>
<dbReference type="GeneID" id="87105383"/>
<dbReference type="KEGG" id="neu:NE2248"/>
<dbReference type="eggNOG" id="COG1666">
    <property type="taxonomic scope" value="Bacteria"/>
</dbReference>
<dbReference type="HOGENOM" id="CLU_099839_1_0_4"/>
<dbReference type="OrthoDB" id="9801447at2"/>
<dbReference type="PhylomeDB" id="Q82SQ9"/>
<dbReference type="Proteomes" id="UP000001416">
    <property type="component" value="Chromosome"/>
</dbReference>
<dbReference type="GO" id="GO:0005829">
    <property type="term" value="C:cytosol"/>
    <property type="evidence" value="ECO:0007669"/>
    <property type="project" value="TreeGrafter"/>
</dbReference>
<dbReference type="GO" id="GO:0000166">
    <property type="term" value="F:nucleotide binding"/>
    <property type="evidence" value="ECO:0007669"/>
    <property type="project" value="TreeGrafter"/>
</dbReference>
<dbReference type="CDD" id="cd11740">
    <property type="entry name" value="YajQ_like"/>
    <property type="match status" value="1"/>
</dbReference>
<dbReference type="Gene3D" id="3.30.70.860">
    <property type="match status" value="1"/>
</dbReference>
<dbReference type="Gene3D" id="3.30.70.990">
    <property type="entry name" value="YajQ-like, domain 2"/>
    <property type="match status" value="1"/>
</dbReference>
<dbReference type="HAMAP" id="MF_00632">
    <property type="entry name" value="YajQ"/>
    <property type="match status" value="1"/>
</dbReference>
<dbReference type="InterPro" id="IPR007551">
    <property type="entry name" value="DUF520"/>
</dbReference>
<dbReference type="InterPro" id="IPR035571">
    <property type="entry name" value="UPF0234-like_C"/>
</dbReference>
<dbReference type="InterPro" id="IPR035570">
    <property type="entry name" value="UPF0234_N"/>
</dbReference>
<dbReference type="InterPro" id="IPR036183">
    <property type="entry name" value="YajQ-like_sf"/>
</dbReference>
<dbReference type="NCBIfam" id="NF003819">
    <property type="entry name" value="PRK05412.1"/>
    <property type="match status" value="1"/>
</dbReference>
<dbReference type="PANTHER" id="PTHR30476">
    <property type="entry name" value="UPF0234 PROTEIN YAJQ"/>
    <property type="match status" value="1"/>
</dbReference>
<dbReference type="PANTHER" id="PTHR30476:SF0">
    <property type="entry name" value="UPF0234 PROTEIN YAJQ"/>
    <property type="match status" value="1"/>
</dbReference>
<dbReference type="Pfam" id="PF04461">
    <property type="entry name" value="DUF520"/>
    <property type="match status" value="1"/>
</dbReference>
<dbReference type="SUPFAM" id="SSF89963">
    <property type="entry name" value="YajQ-like"/>
    <property type="match status" value="2"/>
</dbReference>
<feature type="chain" id="PRO_0000106190" description="Nucleotide-binding protein NE2248">
    <location>
        <begin position="1"/>
        <end position="161"/>
    </location>
</feature>
<comment type="function">
    <text evidence="1">Nucleotide-binding protein.</text>
</comment>
<comment type="similarity">
    <text evidence="1">Belongs to the YajQ family.</text>
</comment>
<accession>Q82SQ9</accession>
<protein>
    <recommendedName>
        <fullName evidence="1">Nucleotide-binding protein NE2248</fullName>
    </recommendedName>
</protein>
<proteinExistence type="inferred from homology"/>
<organism>
    <name type="scientific">Nitrosomonas europaea (strain ATCC 19718 / CIP 103999 / KCTC 2705 / NBRC 14298)</name>
    <dbReference type="NCBI Taxonomy" id="228410"/>
    <lineage>
        <taxon>Bacteria</taxon>
        <taxon>Pseudomonadati</taxon>
        <taxon>Pseudomonadota</taxon>
        <taxon>Betaproteobacteria</taxon>
        <taxon>Nitrosomonadales</taxon>
        <taxon>Nitrosomonadaceae</taxon>
        <taxon>Nitrosomonas</taxon>
    </lineage>
</organism>
<sequence length="161" mass="18374">MPSFDIVSEVDKQEIRNAVDQLNKEVSTRFDFKGSDARAEQTDYELYLYADDEFKLGQVMDILMTKFTKREIDVRCLEKGQTEKISGNKVKQKVTVKTGVESDLAKKIIKLVKDSKLKVQASIQGEVVRVTGAKRDILQEAIQLVKGSITELPLQFRNFRD</sequence>
<name>Y2248_NITEU</name>
<gene>
    <name type="ordered locus">NE2248</name>
</gene>
<reference key="1">
    <citation type="journal article" date="2003" name="J. Bacteriol.">
        <title>Complete genome sequence of the ammonia-oxidizing bacterium and obligate chemolithoautotroph Nitrosomonas europaea.</title>
        <authorList>
            <person name="Chain P."/>
            <person name="Lamerdin J.E."/>
            <person name="Larimer F.W."/>
            <person name="Regala W."/>
            <person name="Lao V."/>
            <person name="Land M.L."/>
            <person name="Hauser L."/>
            <person name="Hooper A.B."/>
            <person name="Klotz M.G."/>
            <person name="Norton J."/>
            <person name="Sayavedra-Soto L.A."/>
            <person name="Arciero D.M."/>
            <person name="Hommes N.G."/>
            <person name="Whittaker M.M."/>
            <person name="Arp D.J."/>
        </authorList>
    </citation>
    <scope>NUCLEOTIDE SEQUENCE [LARGE SCALE GENOMIC DNA]</scope>
    <source>
        <strain>ATCC 19718 / CIP 103999 / KCTC 2705 / NBRC 14298</strain>
    </source>
</reference>